<comment type="function">
    <text>Mitochondrial peptide chain release factor that directs the termination of translation in response to the peptide chain termination codons UAA and UAG.</text>
</comment>
<comment type="interaction">
    <interactant intactId="EBI-14964">
        <id>P30775</id>
    </interactant>
    <interactant intactId="EBI-28737">
        <id>P53944</id>
        <label>MTQ1</label>
    </interactant>
    <organismsDiffer>false</organismsDiffer>
    <experiments>2</experiments>
</comment>
<comment type="subcellular location">
    <subcellularLocation>
        <location>Mitochondrion</location>
    </subcellularLocation>
</comment>
<comment type="PTM">
    <text evidence="1 5">Methylation of glutamine in the GGQ triplet is conserved from bacteria to mammals (By similarity). N5-methylated on Gln-287 by MTQ1.</text>
</comment>
<comment type="miscellaneous">
    <text evidence="4">Present with 414 molecules/cell in log phase SD medium.</text>
</comment>
<comment type="similarity">
    <text evidence="6">Belongs to the prokaryotic/mitochondrial release factor family.</text>
</comment>
<dbReference type="EMBL" id="X60381">
    <property type="protein sequence ID" value="CAA42932.1"/>
    <property type="molecule type" value="Genomic_DNA"/>
</dbReference>
<dbReference type="EMBL" id="X99960">
    <property type="protein sequence ID" value="CAA68219.1"/>
    <property type="molecule type" value="Genomic_DNA"/>
</dbReference>
<dbReference type="EMBL" id="Z72665">
    <property type="protein sequence ID" value="CAA96855.1"/>
    <property type="molecule type" value="Genomic_DNA"/>
</dbReference>
<dbReference type="EMBL" id="BK006941">
    <property type="protein sequence ID" value="DAA07967.1"/>
    <property type="molecule type" value="Genomic_DNA"/>
</dbReference>
<dbReference type="PIR" id="S28602">
    <property type="entry name" value="S28602"/>
</dbReference>
<dbReference type="RefSeq" id="NP_011372.3">
    <property type="nucleotide sequence ID" value="NM_001181008.3"/>
</dbReference>
<dbReference type="SMR" id="P30775"/>
<dbReference type="BioGRID" id="33109">
    <property type="interactions" value="104"/>
</dbReference>
<dbReference type="DIP" id="DIP-2626N"/>
<dbReference type="FunCoup" id="P30775">
    <property type="interactions" value="846"/>
</dbReference>
<dbReference type="IntAct" id="P30775">
    <property type="interactions" value="4"/>
</dbReference>
<dbReference type="MINT" id="P30775"/>
<dbReference type="STRING" id="4932.YGL143C"/>
<dbReference type="iPTMnet" id="P30775"/>
<dbReference type="PaxDb" id="4932-YGL143C"/>
<dbReference type="PeptideAtlas" id="P30775"/>
<dbReference type="EnsemblFungi" id="YGL143C_mRNA">
    <property type="protein sequence ID" value="YGL143C"/>
    <property type="gene ID" value="YGL143C"/>
</dbReference>
<dbReference type="GeneID" id="852734"/>
<dbReference type="KEGG" id="sce:YGL143C"/>
<dbReference type="AGR" id="SGD:S000003111"/>
<dbReference type="SGD" id="S000003111">
    <property type="gene designation" value="MRF1"/>
</dbReference>
<dbReference type="VEuPathDB" id="FungiDB:YGL143C"/>
<dbReference type="eggNOG" id="KOG2726">
    <property type="taxonomic scope" value="Eukaryota"/>
</dbReference>
<dbReference type="GeneTree" id="ENSGT00940000172260"/>
<dbReference type="HOGENOM" id="CLU_036856_0_8_1"/>
<dbReference type="InParanoid" id="P30775"/>
<dbReference type="OMA" id="NKQKHYA"/>
<dbReference type="OrthoDB" id="2019491at2759"/>
<dbReference type="BioCyc" id="YEAST:G3O-30637-MONOMER"/>
<dbReference type="BioGRID-ORCS" id="852734">
    <property type="hits" value="5 hits in 10 CRISPR screens"/>
</dbReference>
<dbReference type="PRO" id="PR:P30775"/>
<dbReference type="Proteomes" id="UP000002311">
    <property type="component" value="Chromosome VII"/>
</dbReference>
<dbReference type="RNAct" id="P30775">
    <property type="molecule type" value="protein"/>
</dbReference>
<dbReference type="GO" id="GO:0005739">
    <property type="term" value="C:mitochondrion"/>
    <property type="evidence" value="ECO:0000314"/>
    <property type="project" value="SGD"/>
</dbReference>
<dbReference type="GO" id="GO:0003747">
    <property type="term" value="F:translation release factor activity"/>
    <property type="evidence" value="ECO:0000314"/>
    <property type="project" value="SGD"/>
</dbReference>
<dbReference type="GO" id="GO:0032543">
    <property type="term" value="P:mitochondrial translation"/>
    <property type="evidence" value="ECO:0000315"/>
    <property type="project" value="SGD"/>
</dbReference>
<dbReference type="GO" id="GO:0070126">
    <property type="term" value="P:mitochondrial translational termination"/>
    <property type="evidence" value="ECO:0000315"/>
    <property type="project" value="SGD"/>
</dbReference>
<dbReference type="GO" id="GO:0006415">
    <property type="term" value="P:translational termination"/>
    <property type="evidence" value="ECO:0000315"/>
    <property type="project" value="SGD"/>
</dbReference>
<dbReference type="FunFam" id="3.30.70.1660:FF:000018">
    <property type="entry name" value="Mitochondrial translation release factor"/>
    <property type="match status" value="1"/>
</dbReference>
<dbReference type="FunFam" id="3.30.70.1660:FF:000019">
    <property type="entry name" value="Mitochondrial translation release factor"/>
    <property type="match status" value="1"/>
</dbReference>
<dbReference type="FunFam" id="3.30.160.20:FF:000004">
    <property type="entry name" value="Peptide chain release factor 1"/>
    <property type="match status" value="1"/>
</dbReference>
<dbReference type="Gene3D" id="3.30.160.20">
    <property type="match status" value="1"/>
</dbReference>
<dbReference type="Gene3D" id="3.30.70.1660">
    <property type="match status" value="2"/>
</dbReference>
<dbReference type="Gene3D" id="6.10.140.1950">
    <property type="match status" value="1"/>
</dbReference>
<dbReference type="InterPro" id="IPR005139">
    <property type="entry name" value="PCRF"/>
</dbReference>
<dbReference type="InterPro" id="IPR000352">
    <property type="entry name" value="Pep_chain_release_fac_I"/>
</dbReference>
<dbReference type="InterPro" id="IPR045853">
    <property type="entry name" value="Pep_chain_release_fac_I_sf"/>
</dbReference>
<dbReference type="InterPro" id="IPR050057">
    <property type="entry name" value="Prokaryotic/Mito_RF"/>
</dbReference>
<dbReference type="PANTHER" id="PTHR43804">
    <property type="entry name" value="LD18447P"/>
    <property type="match status" value="1"/>
</dbReference>
<dbReference type="PANTHER" id="PTHR43804:SF7">
    <property type="entry name" value="LD18447P"/>
    <property type="match status" value="1"/>
</dbReference>
<dbReference type="Pfam" id="PF03462">
    <property type="entry name" value="PCRF"/>
    <property type="match status" value="1"/>
</dbReference>
<dbReference type="Pfam" id="PF00472">
    <property type="entry name" value="RF-1"/>
    <property type="match status" value="1"/>
</dbReference>
<dbReference type="SMART" id="SM00937">
    <property type="entry name" value="PCRF"/>
    <property type="match status" value="1"/>
</dbReference>
<dbReference type="SUPFAM" id="SSF75620">
    <property type="entry name" value="Release factor"/>
    <property type="match status" value="1"/>
</dbReference>
<dbReference type="PROSITE" id="PS00745">
    <property type="entry name" value="RF_PROK_I"/>
    <property type="match status" value="1"/>
</dbReference>
<organism>
    <name type="scientific">Saccharomyces cerevisiae (strain ATCC 204508 / S288c)</name>
    <name type="common">Baker's yeast</name>
    <dbReference type="NCBI Taxonomy" id="559292"/>
    <lineage>
        <taxon>Eukaryota</taxon>
        <taxon>Fungi</taxon>
        <taxon>Dikarya</taxon>
        <taxon>Ascomycota</taxon>
        <taxon>Saccharomycotina</taxon>
        <taxon>Saccharomycetes</taxon>
        <taxon>Saccharomycetales</taxon>
        <taxon>Saccharomycetaceae</taxon>
        <taxon>Saccharomyces</taxon>
    </lineage>
</organism>
<proteinExistence type="evidence at protein level"/>
<feature type="transit peptide" description="Mitochondrion" evidence="2">
    <location>
        <begin position="1"/>
        <end status="unknown"/>
    </location>
</feature>
<feature type="chain" id="PRO_0000030337" description="Peptide chain release factor 1, mitochondrial">
    <location>
        <begin status="unknown"/>
        <end position="413"/>
    </location>
</feature>
<feature type="region of interest" description="Disordered" evidence="3">
    <location>
        <begin position="335"/>
        <end position="363"/>
    </location>
</feature>
<feature type="modified residue" description="N5-methylglutamine" evidence="5">
    <location>
        <position position="287"/>
    </location>
</feature>
<protein>
    <recommendedName>
        <fullName>Peptide chain release factor 1, mitochondrial</fullName>
        <shortName>MRF-1</shortName>
        <shortName>MtRF-1</shortName>
    </recommendedName>
</protein>
<evidence type="ECO:0000250" key="1"/>
<evidence type="ECO:0000255" key="2"/>
<evidence type="ECO:0000256" key="3">
    <source>
        <dbReference type="SAM" id="MobiDB-lite"/>
    </source>
</evidence>
<evidence type="ECO:0000269" key="4">
    <source>
    </source>
</evidence>
<evidence type="ECO:0000269" key="5">
    <source>
    </source>
</evidence>
<evidence type="ECO:0000305" key="6"/>
<reference key="1">
    <citation type="journal article" date="1992" name="Nucleic Acids Res.">
        <title>The yeast nuclear gene MRF1 encodes a mitochondrial peptide chain release factor and cures several mitochondrial RNA splicing defects.</title>
        <authorList>
            <person name="Pel H.J."/>
            <person name="Maat M.J."/>
            <person name="Rep M."/>
            <person name="Grivell L.A."/>
        </authorList>
    </citation>
    <scope>NUCLEOTIDE SEQUENCE [GENOMIC DNA]</scope>
</reference>
<reference key="2">
    <citation type="journal article" date="1997" name="Yeast">
        <title>The sequence of a nearly unclonable 22.8 kb segment on the left arm chromosome VII from Saccharomyces cerevisiae reveals ARO2, RPL9A, TIP1, MRF1 genes and six new open reading frames.</title>
        <authorList>
            <person name="Voet M."/>
            <person name="Defoor E."/>
            <person name="Verhasselt P."/>
            <person name="Riles L."/>
            <person name="Robben J."/>
            <person name="Volckaert G."/>
        </authorList>
    </citation>
    <scope>NUCLEOTIDE SEQUENCE [GENOMIC DNA]</scope>
    <source>
        <strain>ATCC 96604 / S288c / FY1679</strain>
    </source>
</reference>
<reference key="3">
    <citation type="journal article" date="1997" name="Nature">
        <title>The nucleotide sequence of Saccharomyces cerevisiae chromosome VII.</title>
        <authorList>
            <person name="Tettelin H."/>
            <person name="Agostoni-Carbone M.L."/>
            <person name="Albermann K."/>
            <person name="Albers M."/>
            <person name="Arroyo J."/>
            <person name="Backes U."/>
            <person name="Barreiros T."/>
            <person name="Bertani I."/>
            <person name="Bjourson A.J."/>
            <person name="Brueckner M."/>
            <person name="Bruschi C.V."/>
            <person name="Carignani G."/>
            <person name="Castagnoli L."/>
            <person name="Cerdan E."/>
            <person name="Clemente M.L."/>
            <person name="Coblenz A."/>
            <person name="Coglievina M."/>
            <person name="Coissac E."/>
            <person name="Defoor E."/>
            <person name="Del Bino S."/>
            <person name="Delius H."/>
            <person name="Delneri D."/>
            <person name="de Wergifosse P."/>
            <person name="Dujon B."/>
            <person name="Durand P."/>
            <person name="Entian K.-D."/>
            <person name="Eraso P."/>
            <person name="Escribano V."/>
            <person name="Fabiani L."/>
            <person name="Fartmann B."/>
            <person name="Feroli F."/>
            <person name="Feuermann M."/>
            <person name="Frontali L."/>
            <person name="Garcia-Gonzalez M."/>
            <person name="Garcia-Saez M.I."/>
            <person name="Goffeau A."/>
            <person name="Guerreiro P."/>
            <person name="Hani J."/>
            <person name="Hansen M."/>
            <person name="Hebling U."/>
            <person name="Hernandez K."/>
            <person name="Heumann K."/>
            <person name="Hilger F."/>
            <person name="Hofmann B."/>
            <person name="Indge K.J."/>
            <person name="James C.M."/>
            <person name="Klima R."/>
            <person name="Koetter P."/>
            <person name="Kramer B."/>
            <person name="Kramer W."/>
            <person name="Lauquin G."/>
            <person name="Leuther H."/>
            <person name="Louis E.J."/>
            <person name="Maillier E."/>
            <person name="Marconi A."/>
            <person name="Martegani E."/>
            <person name="Mazon M.J."/>
            <person name="Mazzoni C."/>
            <person name="McReynolds A.D.K."/>
            <person name="Melchioretto P."/>
            <person name="Mewes H.-W."/>
            <person name="Minenkova O."/>
            <person name="Mueller-Auer S."/>
            <person name="Nawrocki A."/>
            <person name="Netter P."/>
            <person name="Neu R."/>
            <person name="Nombela C."/>
            <person name="Oliver S.G."/>
            <person name="Panzeri L."/>
            <person name="Paoluzi S."/>
            <person name="Plevani P."/>
            <person name="Portetelle D."/>
            <person name="Portillo F."/>
            <person name="Potier S."/>
            <person name="Purnelle B."/>
            <person name="Rieger M."/>
            <person name="Riles L."/>
            <person name="Rinaldi T."/>
            <person name="Robben J."/>
            <person name="Rodrigues-Pousada C."/>
            <person name="Rodriguez-Belmonte E."/>
            <person name="Rodriguez-Torres A.M."/>
            <person name="Rose M."/>
            <person name="Ruzzi M."/>
            <person name="Saliola M."/>
            <person name="Sanchez-Perez M."/>
            <person name="Schaefer B."/>
            <person name="Schaefer M."/>
            <person name="Scharfe M."/>
            <person name="Schmidheini T."/>
            <person name="Schreer A."/>
            <person name="Skala J."/>
            <person name="Souciet J.-L."/>
            <person name="Steensma H.Y."/>
            <person name="Talla E."/>
            <person name="Thierry A."/>
            <person name="Vandenbol M."/>
            <person name="van der Aart Q.J.M."/>
            <person name="Van Dyck L."/>
            <person name="Vanoni M."/>
            <person name="Verhasselt P."/>
            <person name="Voet M."/>
            <person name="Volckaert G."/>
            <person name="Wambutt R."/>
            <person name="Watson M.D."/>
            <person name="Weber N."/>
            <person name="Wedler E."/>
            <person name="Wedler H."/>
            <person name="Wipfli P."/>
            <person name="Wolf K."/>
            <person name="Wright L.F."/>
            <person name="Zaccaria P."/>
            <person name="Zimmermann M."/>
            <person name="Zollner A."/>
            <person name="Kleine K."/>
        </authorList>
    </citation>
    <scope>NUCLEOTIDE SEQUENCE [LARGE SCALE GENOMIC DNA]</scope>
    <source>
        <strain>ATCC 204508 / S288c</strain>
    </source>
</reference>
<reference key="4">
    <citation type="journal article" date="2014" name="G3 (Bethesda)">
        <title>The reference genome sequence of Saccharomyces cerevisiae: Then and now.</title>
        <authorList>
            <person name="Engel S.R."/>
            <person name="Dietrich F.S."/>
            <person name="Fisk D.G."/>
            <person name="Binkley G."/>
            <person name="Balakrishnan R."/>
            <person name="Costanzo M.C."/>
            <person name="Dwight S.S."/>
            <person name="Hitz B.C."/>
            <person name="Karra K."/>
            <person name="Nash R.S."/>
            <person name="Weng S."/>
            <person name="Wong E.D."/>
            <person name="Lloyd P."/>
            <person name="Skrzypek M.S."/>
            <person name="Miyasato S.R."/>
            <person name="Simison M."/>
            <person name="Cherry J.M."/>
        </authorList>
    </citation>
    <scope>GENOME REANNOTATION</scope>
    <source>
        <strain>ATCC 204508 / S288c</strain>
    </source>
</reference>
<reference key="5">
    <citation type="journal article" date="2003" name="Nature">
        <title>Global analysis of protein expression in yeast.</title>
        <authorList>
            <person name="Ghaemmaghami S."/>
            <person name="Huh W.-K."/>
            <person name="Bower K."/>
            <person name="Howson R.W."/>
            <person name="Belle A."/>
            <person name="Dephoure N."/>
            <person name="O'Shea E.K."/>
            <person name="Weissman J.S."/>
        </authorList>
    </citation>
    <scope>LEVEL OF PROTEIN EXPRESSION [LARGE SCALE ANALYSIS]</scope>
</reference>
<reference key="6">
    <citation type="journal article" date="2006" name="J. Biol. Chem.">
        <title>The yeast translation release factors Mrf1p and Sup45p (eRF1) are methylated, respectively, by the methyltransferases Mtq1p and Mtq2p.</title>
        <authorList>
            <person name="Polevoda B."/>
            <person name="Span L."/>
            <person name="Sherman F."/>
        </authorList>
    </citation>
    <scope>METHYLATION AT GLN-287</scope>
    <scope>IDENTIFICATION BY MASS SPECTROMETRY</scope>
</reference>
<gene>
    <name type="primary">MRF1</name>
    <name type="ordered locus">YGL143C</name>
</gene>
<keyword id="KW-0488">Methylation</keyword>
<keyword id="KW-0496">Mitochondrion</keyword>
<keyword id="KW-0648">Protein biosynthesis</keyword>
<keyword id="KW-1185">Reference proteome</keyword>
<keyword id="KW-0809">Transit peptide</keyword>
<accession>P30775</accession>
<accession>D6VU06</accession>
<name>RF1M_YEAST</name>
<sequence>MWLSKFQFPSRSIFKGVFLGHKLPLLVRLTSTTTNSKSNGSIPTQYTELSPLLVKQAEKYEAELKDLDKDLSCGIHFDVNKQKHYAKLSALTDTFIEYKEKLNELKSLQEMIVSDPSLRAEAEQEYAELVPQYETTSSRLVNKLLPPHPFADKPSLLELRPGVGGIEAMIFTQNLLDMYIGYANYRKWKYRIISKNENESGSGIIDAILSIEEAGSYDRLRFEAGVHRVQRIPSTETKGRTHTSTAAVVVLPQIGDESAKSIDAYERTFKPGEIRVDIMRASGKGGQHVNTTDSAVRLTHIPSGIVVSMQDERSQHKNKAKAFTILRARLAEKERLEKEEKERKARKSQVSSTNRSDKIRTYNFPQNRITDHRCGFTLLDLPGVLSGERLDEVIEAMSKYDSTERAKELLESN</sequence>